<organism>
    <name type="scientific">Staphylococcus aureus (strain Mu50 / ATCC 700699)</name>
    <dbReference type="NCBI Taxonomy" id="158878"/>
    <lineage>
        <taxon>Bacteria</taxon>
        <taxon>Bacillati</taxon>
        <taxon>Bacillota</taxon>
        <taxon>Bacilli</taxon>
        <taxon>Bacillales</taxon>
        <taxon>Staphylococcaceae</taxon>
        <taxon>Staphylococcus</taxon>
    </lineage>
</organism>
<evidence type="ECO:0000255" key="1">
    <source>
        <dbReference type="HAMAP-Rule" id="MF_01953"/>
    </source>
</evidence>
<accession>P67403</accession>
<accession>Q99RY2</accession>
<proteinExistence type="inferred from homology"/>
<name>URE1_STAAM</name>
<gene>
    <name evidence="1" type="primary">ureC</name>
    <name type="ordered locus">SAV2290</name>
</gene>
<reference key="1">
    <citation type="journal article" date="2001" name="Lancet">
        <title>Whole genome sequencing of meticillin-resistant Staphylococcus aureus.</title>
        <authorList>
            <person name="Kuroda M."/>
            <person name="Ohta T."/>
            <person name="Uchiyama I."/>
            <person name="Baba T."/>
            <person name="Yuzawa H."/>
            <person name="Kobayashi I."/>
            <person name="Cui L."/>
            <person name="Oguchi A."/>
            <person name="Aoki K."/>
            <person name="Nagai Y."/>
            <person name="Lian J.-Q."/>
            <person name="Ito T."/>
            <person name="Kanamori M."/>
            <person name="Matsumaru H."/>
            <person name="Maruyama A."/>
            <person name="Murakami H."/>
            <person name="Hosoyama A."/>
            <person name="Mizutani-Ui Y."/>
            <person name="Takahashi N.K."/>
            <person name="Sawano T."/>
            <person name="Inoue R."/>
            <person name="Kaito C."/>
            <person name="Sekimizu K."/>
            <person name="Hirakawa H."/>
            <person name="Kuhara S."/>
            <person name="Goto S."/>
            <person name="Yabuzaki J."/>
            <person name="Kanehisa M."/>
            <person name="Yamashita A."/>
            <person name="Oshima K."/>
            <person name="Furuya K."/>
            <person name="Yoshino C."/>
            <person name="Shiba T."/>
            <person name="Hattori M."/>
            <person name="Ogasawara N."/>
            <person name="Hayashi H."/>
            <person name="Hiramatsu K."/>
        </authorList>
    </citation>
    <scope>NUCLEOTIDE SEQUENCE [LARGE SCALE GENOMIC DNA]</scope>
    <source>
        <strain>Mu50 / ATCC 700699</strain>
    </source>
</reference>
<protein>
    <recommendedName>
        <fullName evidence="1">Urease subunit alpha</fullName>
        <ecNumber evidence="1">3.5.1.5</ecNumber>
    </recommendedName>
    <alternativeName>
        <fullName evidence="1">Urea amidohydrolase subunit alpha</fullName>
    </alternativeName>
</protein>
<keyword id="KW-0963">Cytoplasm</keyword>
<keyword id="KW-0378">Hydrolase</keyword>
<keyword id="KW-0479">Metal-binding</keyword>
<keyword id="KW-0533">Nickel</keyword>
<sequence>MSFKMTQNQYTSLYGPTVGDSIRLGDTNLFAQIEKDYAVYGEEATFGGGKSIRDGMAQNPRVTRDDVNVADLVISNAVIIDYDKVVKADIGIKNGYIFAIGNAGNPDIMDNVDIIIGSTTDIIAAEGKIVTAGGIDTHVHFINPEQAEVALESGITTHIGGGTGASEGSKATTVTPGPWHIHRMLEAAEGLPINVGFTGKGQATNPTALIEQINAGAIGLKVHEDWGATPSALSHALDVADEFDVQIALHADTLNEAGFMEDTMAAVKDRVLHMYHTEGAGGGHAPDLIKSAAFSNILPSSTNPTLPYTHNTVDEHLDMVMITHHLNAAIPEDIAFADSRIRKETIAAEDVLQDMGVFSMISSDSQAMGRVGEVITRTWQVAHRMKEQRGPLDGDFEHNDNNRIKRYIAKYTINPAITHGISEYVGSIEPGKLADIVLWDPIFFGVKPELVVKGGLINSAVNGDANGSIPTSEPMKYRKMYGQYGGNLTSTSMTFVSKTAYENGINRALNLKRMVRPVKNIRQLSKADMKNNSATPKLDVDPQTYEVYVDGEKITSNAATELPLTQRYFLF</sequence>
<feature type="chain" id="PRO_0000067553" description="Urease subunit alpha">
    <location>
        <begin position="1"/>
        <end position="571"/>
    </location>
</feature>
<feature type="domain" description="Urease" evidence="1">
    <location>
        <begin position="133"/>
        <end position="571"/>
    </location>
</feature>
<feature type="active site" description="Proton donor" evidence="1">
    <location>
        <position position="324"/>
    </location>
</feature>
<feature type="binding site" evidence="1">
    <location>
        <position position="138"/>
    </location>
    <ligand>
        <name>Ni(2+)</name>
        <dbReference type="ChEBI" id="CHEBI:49786"/>
        <label>1</label>
    </ligand>
</feature>
<feature type="binding site" evidence="1">
    <location>
        <position position="140"/>
    </location>
    <ligand>
        <name>Ni(2+)</name>
        <dbReference type="ChEBI" id="CHEBI:49786"/>
        <label>1</label>
    </ligand>
</feature>
<feature type="binding site" description="via carbamate group" evidence="1">
    <location>
        <position position="221"/>
    </location>
    <ligand>
        <name>Ni(2+)</name>
        <dbReference type="ChEBI" id="CHEBI:49786"/>
        <label>1</label>
    </ligand>
</feature>
<feature type="binding site" description="via carbamate group" evidence="1">
    <location>
        <position position="221"/>
    </location>
    <ligand>
        <name>Ni(2+)</name>
        <dbReference type="ChEBI" id="CHEBI:49786"/>
        <label>2</label>
    </ligand>
</feature>
<feature type="binding site" evidence="1">
    <location>
        <position position="223"/>
    </location>
    <ligand>
        <name>substrate</name>
    </ligand>
</feature>
<feature type="binding site" evidence="1">
    <location>
        <position position="250"/>
    </location>
    <ligand>
        <name>Ni(2+)</name>
        <dbReference type="ChEBI" id="CHEBI:49786"/>
        <label>2</label>
    </ligand>
</feature>
<feature type="binding site" evidence="1">
    <location>
        <position position="276"/>
    </location>
    <ligand>
        <name>Ni(2+)</name>
        <dbReference type="ChEBI" id="CHEBI:49786"/>
        <label>2</label>
    </ligand>
</feature>
<feature type="binding site" evidence="1">
    <location>
        <position position="364"/>
    </location>
    <ligand>
        <name>Ni(2+)</name>
        <dbReference type="ChEBI" id="CHEBI:49786"/>
        <label>1</label>
    </ligand>
</feature>
<feature type="modified residue" description="N6-carboxylysine" evidence="1">
    <location>
        <position position="221"/>
    </location>
</feature>
<dbReference type="EC" id="3.5.1.5" evidence="1"/>
<dbReference type="EMBL" id="BA000017">
    <property type="protein sequence ID" value="BAB58452.1"/>
    <property type="molecule type" value="Genomic_DNA"/>
</dbReference>
<dbReference type="RefSeq" id="WP_000008673.1">
    <property type="nucleotide sequence ID" value="NC_002758.2"/>
</dbReference>
<dbReference type="SMR" id="P67403"/>
<dbReference type="MEROPS" id="M38.982"/>
<dbReference type="KEGG" id="sav:SAV2290"/>
<dbReference type="HOGENOM" id="CLU_000980_0_0_9"/>
<dbReference type="PhylomeDB" id="P67403"/>
<dbReference type="UniPathway" id="UPA00258">
    <property type="reaction ID" value="UER00370"/>
</dbReference>
<dbReference type="Proteomes" id="UP000002481">
    <property type="component" value="Chromosome"/>
</dbReference>
<dbReference type="GO" id="GO:0005737">
    <property type="term" value="C:cytoplasm"/>
    <property type="evidence" value="ECO:0007669"/>
    <property type="project" value="UniProtKB-SubCell"/>
</dbReference>
<dbReference type="GO" id="GO:0016151">
    <property type="term" value="F:nickel cation binding"/>
    <property type="evidence" value="ECO:0007669"/>
    <property type="project" value="UniProtKB-UniRule"/>
</dbReference>
<dbReference type="GO" id="GO:0009039">
    <property type="term" value="F:urease activity"/>
    <property type="evidence" value="ECO:0007669"/>
    <property type="project" value="UniProtKB-UniRule"/>
</dbReference>
<dbReference type="GO" id="GO:0043419">
    <property type="term" value="P:urea catabolic process"/>
    <property type="evidence" value="ECO:0007669"/>
    <property type="project" value="UniProtKB-UniRule"/>
</dbReference>
<dbReference type="CDD" id="cd00375">
    <property type="entry name" value="Urease_alpha"/>
    <property type="match status" value="1"/>
</dbReference>
<dbReference type="Gene3D" id="3.20.20.140">
    <property type="entry name" value="Metal-dependent hydrolases"/>
    <property type="match status" value="1"/>
</dbReference>
<dbReference type="Gene3D" id="2.30.40.10">
    <property type="entry name" value="Urease, subunit C, domain 1"/>
    <property type="match status" value="1"/>
</dbReference>
<dbReference type="HAMAP" id="MF_01953">
    <property type="entry name" value="Urease_alpha"/>
    <property type="match status" value="1"/>
</dbReference>
<dbReference type="InterPro" id="IPR006680">
    <property type="entry name" value="Amidohydro-rel"/>
</dbReference>
<dbReference type="InterPro" id="IPR011059">
    <property type="entry name" value="Metal-dep_hydrolase_composite"/>
</dbReference>
<dbReference type="InterPro" id="IPR032466">
    <property type="entry name" value="Metal_Hydrolase"/>
</dbReference>
<dbReference type="InterPro" id="IPR011612">
    <property type="entry name" value="Urease_alpha_N_dom"/>
</dbReference>
<dbReference type="InterPro" id="IPR050112">
    <property type="entry name" value="Urease_alpha_subunit"/>
</dbReference>
<dbReference type="InterPro" id="IPR017950">
    <property type="entry name" value="Urease_AS"/>
</dbReference>
<dbReference type="InterPro" id="IPR005848">
    <property type="entry name" value="Urease_asu"/>
</dbReference>
<dbReference type="InterPro" id="IPR017951">
    <property type="entry name" value="Urease_asu_c"/>
</dbReference>
<dbReference type="InterPro" id="IPR029754">
    <property type="entry name" value="Urease_Ni-bd"/>
</dbReference>
<dbReference type="NCBIfam" id="NF009686">
    <property type="entry name" value="PRK13207.1"/>
    <property type="match status" value="1"/>
</dbReference>
<dbReference type="NCBIfam" id="TIGR01792">
    <property type="entry name" value="urease_alph"/>
    <property type="match status" value="1"/>
</dbReference>
<dbReference type="PANTHER" id="PTHR43440">
    <property type="entry name" value="UREASE"/>
    <property type="match status" value="1"/>
</dbReference>
<dbReference type="PANTHER" id="PTHR43440:SF1">
    <property type="entry name" value="UREASE"/>
    <property type="match status" value="1"/>
</dbReference>
<dbReference type="Pfam" id="PF01979">
    <property type="entry name" value="Amidohydro_1"/>
    <property type="match status" value="1"/>
</dbReference>
<dbReference type="Pfam" id="PF00449">
    <property type="entry name" value="Urease_alpha"/>
    <property type="match status" value="1"/>
</dbReference>
<dbReference type="PRINTS" id="PR01752">
    <property type="entry name" value="UREASE"/>
</dbReference>
<dbReference type="SUPFAM" id="SSF51338">
    <property type="entry name" value="Composite domain of metallo-dependent hydrolases"/>
    <property type="match status" value="1"/>
</dbReference>
<dbReference type="SUPFAM" id="SSF51556">
    <property type="entry name" value="Metallo-dependent hydrolases"/>
    <property type="match status" value="1"/>
</dbReference>
<dbReference type="PROSITE" id="PS01120">
    <property type="entry name" value="UREASE_1"/>
    <property type="match status" value="1"/>
</dbReference>
<dbReference type="PROSITE" id="PS00145">
    <property type="entry name" value="UREASE_2"/>
    <property type="match status" value="1"/>
</dbReference>
<dbReference type="PROSITE" id="PS51368">
    <property type="entry name" value="UREASE_3"/>
    <property type="match status" value="1"/>
</dbReference>
<comment type="catalytic activity">
    <reaction evidence="1">
        <text>urea + 2 H2O + H(+) = hydrogencarbonate + 2 NH4(+)</text>
        <dbReference type="Rhea" id="RHEA:20557"/>
        <dbReference type="ChEBI" id="CHEBI:15377"/>
        <dbReference type="ChEBI" id="CHEBI:15378"/>
        <dbReference type="ChEBI" id="CHEBI:16199"/>
        <dbReference type="ChEBI" id="CHEBI:17544"/>
        <dbReference type="ChEBI" id="CHEBI:28938"/>
        <dbReference type="EC" id="3.5.1.5"/>
    </reaction>
</comment>
<comment type="cofactor">
    <cofactor evidence="1">
        <name>Ni cation</name>
        <dbReference type="ChEBI" id="CHEBI:25516"/>
    </cofactor>
    <text evidence="1">Binds 2 nickel ions per subunit.</text>
</comment>
<comment type="pathway">
    <text evidence="1">Nitrogen metabolism; urea degradation; CO(2) and NH(3) from urea (urease route): step 1/1.</text>
</comment>
<comment type="subunit">
    <text evidence="1">Heterotrimer of UreA (gamma), UreB (beta) and UreC (alpha) subunits. Three heterotrimers associate to form the active enzyme.</text>
</comment>
<comment type="subcellular location">
    <subcellularLocation>
        <location evidence="1">Cytoplasm</location>
    </subcellularLocation>
</comment>
<comment type="PTM">
    <text evidence="1">Carboxylation allows a single lysine to coordinate two nickel ions.</text>
</comment>
<comment type="similarity">
    <text evidence="1">Belongs to the metallo-dependent hydrolases superfamily. Urease alpha subunit family.</text>
</comment>